<gene>
    <name evidence="1" type="primary">pckA</name>
    <name type="ordered locus">PA14_68580</name>
</gene>
<evidence type="ECO:0000255" key="1">
    <source>
        <dbReference type="HAMAP-Rule" id="MF_00453"/>
    </source>
</evidence>
<protein>
    <recommendedName>
        <fullName evidence="1">Phosphoenolpyruvate carboxykinase (ATP)</fullName>
        <shortName evidence="1">PCK</shortName>
        <shortName evidence="1">PEP carboxykinase</shortName>
        <shortName evidence="1">PEPCK</shortName>
        <ecNumber evidence="1">4.1.1.49</ecNumber>
    </recommendedName>
</protein>
<reference key="1">
    <citation type="journal article" date="2006" name="Genome Biol.">
        <title>Genomic analysis reveals that Pseudomonas aeruginosa virulence is combinatorial.</title>
        <authorList>
            <person name="Lee D.G."/>
            <person name="Urbach J.M."/>
            <person name="Wu G."/>
            <person name="Liberati N.T."/>
            <person name="Feinbaum R.L."/>
            <person name="Miyata S."/>
            <person name="Diggins L.T."/>
            <person name="He J."/>
            <person name="Saucier M."/>
            <person name="Deziel E."/>
            <person name="Friedman L."/>
            <person name="Li L."/>
            <person name="Grills G."/>
            <person name="Montgomery K."/>
            <person name="Kucherlapati R."/>
            <person name="Rahme L.G."/>
            <person name="Ausubel F.M."/>
        </authorList>
    </citation>
    <scope>NUCLEOTIDE SEQUENCE [LARGE SCALE GENOMIC DNA]</scope>
    <source>
        <strain>UCBPP-PA14</strain>
    </source>
</reference>
<accession>Q02EH2</accession>
<feature type="chain" id="PRO_1000026338" description="Phosphoenolpyruvate carboxykinase (ATP)">
    <location>
        <begin position="1"/>
        <end position="513"/>
    </location>
</feature>
<feature type="binding site" evidence="1">
    <location>
        <position position="45"/>
    </location>
    <ligand>
        <name>substrate</name>
    </ligand>
</feature>
<feature type="binding site" evidence="1">
    <location>
        <position position="179"/>
    </location>
    <ligand>
        <name>substrate</name>
    </ligand>
</feature>
<feature type="binding site" evidence="1">
    <location>
        <position position="185"/>
    </location>
    <ligand>
        <name>ATP</name>
        <dbReference type="ChEBI" id="CHEBI:30616"/>
    </ligand>
</feature>
<feature type="binding site" evidence="1">
    <location>
        <position position="185"/>
    </location>
    <ligand>
        <name>Mn(2+)</name>
        <dbReference type="ChEBI" id="CHEBI:29035"/>
    </ligand>
</feature>
<feature type="binding site" evidence="1">
    <location>
        <position position="185"/>
    </location>
    <ligand>
        <name>substrate</name>
    </ligand>
</feature>
<feature type="binding site" evidence="1">
    <location>
        <position position="204"/>
    </location>
    <ligand>
        <name>ATP</name>
        <dbReference type="ChEBI" id="CHEBI:30616"/>
    </ligand>
</feature>
<feature type="binding site" evidence="1">
    <location>
        <position position="204"/>
    </location>
    <ligand>
        <name>Mn(2+)</name>
        <dbReference type="ChEBI" id="CHEBI:29035"/>
    </ligand>
</feature>
<feature type="binding site" evidence="1">
    <location>
        <begin position="220"/>
        <end position="228"/>
    </location>
    <ligand>
        <name>ATP</name>
        <dbReference type="ChEBI" id="CHEBI:30616"/>
    </ligand>
</feature>
<feature type="binding site" evidence="1">
    <location>
        <position position="241"/>
    </location>
    <ligand>
        <name>Mn(2+)</name>
        <dbReference type="ChEBI" id="CHEBI:29035"/>
    </ligand>
</feature>
<feature type="binding site" evidence="1">
    <location>
        <position position="269"/>
    </location>
    <ligand>
        <name>ATP</name>
        <dbReference type="ChEBI" id="CHEBI:30616"/>
    </ligand>
</feature>
<feature type="binding site" evidence="1">
    <location>
        <position position="305"/>
    </location>
    <ligand>
        <name>ATP</name>
        <dbReference type="ChEBI" id="CHEBI:30616"/>
    </ligand>
</feature>
<feature type="binding site" evidence="1">
    <location>
        <position position="305"/>
    </location>
    <ligand>
        <name>substrate</name>
    </ligand>
</feature>
<feature type="binding site" evidence="1">
    <location>
        <position position="431"/>
    </location>
    <ligand>
        <name>ATP</name>
        <dbReference type="ChEBI" id="CHEBI:30616"/>
    </ligand>
</feature>
<organism>
    <name type="scientific">Pseudomonas aeruginosa (strain UCBPP-PA14)</name>
    <dbReference type="NCBI Taxonomy" id="208963"/>
    <lineage>
        <taxon>Bacteria</taxon>
        <taxon>Pseudomonadati</taxon>
        <taxon>Pseudomonadota</taxon>
        <taxon>Gammaproteobacteria</taxon>
        <taxon>Pseudomonadales</taxon>
        <taxon>Pseudomonadaceae</taxon>
        <taxon>Pseudomonas</taxon>
    </lineage>
</organism>
<sequence>MTQANNAVYTDISAAQLVEEAIRRGEGELAANGSLVVRTGHRTGRSPVDRFIVEEPSTKDAIAWGNINRPFPADKFDALWARVEAFNNAQDHFVSHVHVGSAEAYYLPVKMTTATAWQNLFGRCLFIEPEQYNPAGKDEWQVLNVANFECVPERDGTNSDGCVILNFAQKKVLIAGMRYAGEMKKAMFSVQNFLLPERDVLPMHCAANIGEAGDVTLFFGLSGTGKTTLSADESRYLIGDDEHGWGEGVVFNVEGGCYAKCIDLSEKNEPVIWKAIKFGAVLENVVLDEERVPNYADDSLTQNSRAAYPLEHVEKRSEKNLGGEPNAVIFLTCDLTGVLPPVSILNNEQAAYHFLSGYTALVGSTEMGSGGGIKSTFSTCFGAPFFPRPAGVYAELLIKRIKAFGSKVYLVNTGWTGGGYGVGKRFNIPTTRGVIAAIQSGALIGAETEHLDIINLDVPKVVPGVETNLLNPRNTWADKAAYDEAAKGLAKQFIENFKKFEVSDAIKAAGPQL</sequence>
<keyword id="KW-0067">ATP-binding</keyword>
<keyword id="KW-0963">Cytoplasm</keyword>
<keyword id="KW-0210">Decarboxylase</keyword>
<keyword id="KW-0312">Gluconeogenesis</keyword>
<keyword id="KW-0456">Lyase</keyword>
<keyword id="KW-0464">Manganese</keyword>
<keyword id="KW-0479">Metal-binding</keyword>
<keyword id="KW-0547">Nucleotide-binding</keyword>
<name>PCKA_PSEAB</name>
<proteinExistence type="inferred from homology"/>
<comment type="function">
    <text evidence="1">Involved in the gluconeogenesis. Catalyzes the conversion of oxaloacetate (OAA) to phosphoenolpyruvate (PEP) through direct phosphoryl transfer between the nucleoside triphosphate and OAA.</text>
</comment>
<comment type="catalytic activity">
    <reaction evidence="1">
        <text>oxaloacetate + ATP = phosphoenolpyruvate + ADP + CO2</text>
        <dbReference type="Rhea" id="RHEA:18617"/>
        <dbReference type="ChEBI" id="CHEBI:16452"/>
        <dbReference type="ChEBI" id="CHEBI:16526"/>
        <dbReference type="ChEBI" id="CHEBI:30616"/>
        <dbReference type="ChEBI" id="CHEBI:58702"/>
        <dbReference type="ChEBI" id="CHEBI:456216"/>
        <dbReference type="EC" id="4.1.1.49"/>
    </reaction>
</comment>
<comment type="cofactor">
    <cofactor evidence="1">
        <name>Mn(2+)</name>
        <dbReference type="ChEBI" id="CHEBI:29035"/>
    </cofactor>
    <text evidence="1">Binds 1 Mn(2+) ion per subunit.</text>
</comment>
<comment type="pathway">
    <text evidence="1">Carbohydrate biosynthesis; gluconeogenesis.</text>
</comment>
<comment type="subunit">
    <text evidence="1">Monomer.</text>
</comment>
<comment type="subcellular location">
    <subcellularLocation>
        <location evidence="1">Cytoplasm</location>
    </subcellularLocation>
</comment>
<comment type="similarity">
    <text evidence="1">Belongs to the phosphoenolpyruvate carboxykinase (ATP) family.</text>
</comment>
<dbReference type="EC" id="4.1.1.49" evidence="1"/>
<dbReference type="EMBL" id="CP000438">
    <property type="protein sequence ID" value="ABJ14576.1"/>
    <property type="molecule type" value="Genomic_DNA"/>
</dbReference>
<dbReference type="RefSeq" id="WP_003141918.1">
    <property type="nucleotide sequence ID" value="NZ_CP034244.1"/>
</dbReference>
<dbReference type="SMR" id="Q02EH2"/>
<dbReference type="KEGG" id="pau:PA14_68580"/>
<dbReference type="PseudoCAP" id="PA14_68580"/>
<dbReference type="HOGENOM" id="CLU_018247_0_1_6"/>
<dbReference type="BioCyc" id="PAER208963:G1G74-5780-MONOMER"/>
<dbReference type="UniPathway" id="UPA00138"/>
<dbReference type="Proteomes" id="UP000000653">
    <property type="component" value="Chromosome"/>
</dbReference>
<dbReference type="GO" id="GO:0005829">
    <property type="term" value="C:cytosol"/>
    <property type="evidence" value="ECO:0007669"/>
    <property type="project" value="TreeGrafter"/>
</dbReference>
<dbReference type="GO" id="GO:0005524">
    <property type="term" value="F:ATP binding"/>
    <property type="evidence" value="ECO:0007669"/>
    <property type="project" value="UniProtKB-UniRule"/>
</dbReference>
<dbReference type="GO" id="GO:0046872">
    <property type="term" value="F:metal ion binding"/>
    <property type="evidence" value="ECO:0007669"/>
    <property type="project" value="UniProtKB-KW"/>
</dbReference>
<dbReference type="GO" id="GO:0004612">
    <property type="term" value="F:phosphoenolpyruvate carboxykinase (ATP) activity"/>
    <property type="evidence" value="ECO:0007669"/>
    <property type="project" value="UniProtKB-UniRule"/>
</dbReference>
<dbReference type="GO" id="GO:0006094">
    <property type="term" value="P:gluconeogenesis"/>
    <property type="evidence" value="ECO:0007669"/>
    <property type="project" value="UniProtKB-UniRule"/>
</dbReference>
<dbReference type="CDD" id="cd00484">
    <property type="entry name" value="PEPCK_ATP"/>
    <property type="match status" value="1"/>
</dbReference>
<dbReference type="Gene3D" id="3.90.228.20">
    <property type="match status" value="1"/>
</dbReference>
<dbReference type="Gene3D" id="3.40.449.10">
    <property type="entry name" value="Phosphoenolpyruvate Carboxykinase, domain 1"/>
    <property type="match status" value="1"/>
</dbReference>
<dbReference type="Gene3D" id="2.170.8.10">
    <property type="entry name" value="Phosphoenolpyruvate Carboxykinase, domain 2"/>
    <property type="match status" value="1"/>
</dbReference>
<dbReference type="HAMAP" id="MF_00453">
    <property type="entry name" value="PEPCK_ATP"/>
    <property type="match status" value="1"/>
</dbReference>
<dbReference type="InterPro" id="IPR001272">
    <property type="entry name" value="PEP_carboxykinase_ATP"/>
</dbReference>
<dbReference type="InterPro" id="IPR013035">
    <property type="entry name" value="PEP_carboxykinase_C"/>
</dbReference>
<dbReference type="InterPro" id="IPR008210">
    <property type="entry name" value="PEP_carboxykinase_N"/>
</dbReference>
<dbReference type="InterPro" id="IPR015994">
    <property type="entry name" value="PEPCK_ATP_CS"/>
</dbReference>
<dbReference type="NCBIfam" id="TIGR00224">
    <property type="entry name" value="pckA"/>
    <property type="match status" value="1"/>
</dbReference>
<dbReference type="NCBIfam" id="NF006820">
    <property type="entry name" value="PRK09344.1-2"/>
    <property type="match status" value="1"/>
</dbReference>
<dbReference type="NCBIfam" id="NF006821">
    <property type="entry name" value="PRK09344.1-3"/>
    <property type="match status" value="1"/>
</dbReference>
<dbReference type="NCBIfam" id="NF006823">
    <property type="entry name" value="PRK09344.1-5"/>
    <property type="match status" value="1"/>
</dbReference>
<dbReference type="PANTHER" id="PTHR30031:SF0">
    <property type="entry name" value="PHOSPHOENOLPYRUVATE CARBOXYKINASE (ATP)"/>
    <property type="match status" value="1"/>
</dbReference>
<dbReference type="PANTHER" id="PTHR30031">
    <property type="entry name" value="PHOSPHOENOLPYRUVATE CARBOXYKINASE ATP"/>
    <property type="match status" value="1"/>
</dbReference>
<dbReference type="Pfam" id="PF01293">
    <property type="entry name" value="PEPCK_ATP"/>
    <property type="match status" value="1"/>
</dbReference>
<dbReference type="PIRSF" id="PIRSF006294">
    <property type="entry name" value="PEP_crbxkin"/>
    <property type="match status" value="1"/>
</dbReference>
<dbReference type="SUPFAM" id="SSF68923">
    <property type="entry name" value="PEP carboxykinase N-terminal domain"/>
    <property type="match status" value="1"/>
</dbReference>
<dbReference type="SUPFAM" id="SSF53795">
    <property type="entry name" value="PEP carboxykinase-like"/>
    <property type="match status" value="1"/>
</dbReference>
<dbReference type="PROSITE" id="PS00532">
    <property type="entry name" value="PEPCK_ATP"/>
    <property type="match status" value="1"/>
</dbReference>